<reference key="1">
    <citation type="journal article" date="2001" name="Proc. Natl. Acad. Sci. U.S.A.">
        <title>Complete genomic sequence of Pasteurella multocida Pm70.</title>
        <authorList>
            <person name="May B.J."/>
            <person name="Zhang Q."/>
            <person name="Li L.L."/>
            <person name="Paustian M.L."/>
            <person name="Whittam T.S."/>
            <person name="Kapur V."/>
        </authorList>
    </citation>
    <scope>NUCLEOTIDE SEQUENCE [LARGE SCALE GENOMIC DNA]</scope>
    <source>
        <strain>Pm70</strain>
    </source>
</reference>
<protein>
    <recommendedName>
        <fullName evidence="1">Deoxyguanosinetriphosphate triphosphohydrolase-like protein</fullName>
    </recommendedName>
</protein>
<name>DGTL1_PASMU</name>
<feature type="chain" id="PRO_0000205312" description="Deoxyguanosinetriphosphate triphosphohydrolase-like protein">
    <location>
        <begin position="1"/>
        <end position="450"/>
    </location>
</feature>
<feature type="domain" description="HD" evidence="2">
    <location>
        <begin position="61"/>
        <end position="201"/>
    </location>
</feature>
<proteinExistence type="inferred from homology"/>
<sequence length="450" mass="51810">MNNQVDPIWQSRFIADKPREKDHRPPFRRDRGRILHSAAFRCLQAKTQIHAVGENDFYRTRLTHSLEVAQIGSSLVAQMRFSEAFTALAQQMQQDKTELQKTLKGLLPSNDLIESLCFAHDIGHPPFGHGGEVALNYMMREHGGFEGNAQTFRLLTKLEPYTPNAGMNLTRRTLLGIVKYPTILDISSAQYAKLAPELNADSRYVKMNGWRPGKGLFRDDLPMFEWLLEPLSVKDRDLFGQFKQVRSDPSQILKTKFKSLDCSLMELADDIAYGVHDLEDAIVVGMVNLHQWQSALTALKNCPSEWIQKHIDAITEKLFSDQHYLRKNAIGALVNYFITSVRWTLTDDFNEPLLRYNAQLPAEVEAVLQIFKAFVRDHVILNVDTQRIEYKGQRILTEMFQIFESDPERLLPRNTAKRWQQASKESKKRVICDYMAGMSDAYALRVYQQL</sequence>
<dbReference type="EMBL" id="AE004439">
    <property type="protein sequence ID" value="AAK02962.1"/>
    <property type="molecule type" value="Genomic_DNA"/>
</dbReference>
<dbReference type="RefSeq" id="WP_010906900.1">
    <property type="nucleotide sequence ID" value="NC_002663.1"/>
</dbReference>
<dbReference type="SMR" id="Q9CMF1"/>
<dbReference type="STRING" id="272843.PM0878"/>
<dbReference type="EnsemblBacteria" id="AAK02962">
    <property type="protein sequence ID" value="AAK02962"/>
    <property type="gene ID" value="PM0878"/>
</dbReference>
<dbReference type="KEGG" id="pmu:PM0878"/>
<dbReference type="PATRIC" id="fig|272843.6.peg.889"/>
<dbReference type="HOGENOM" id="CLU_028163_0_0_6"/>
<dbReference type="OrthoDB" id="9803619at2"/>
<dbReference type="Proteomes" id="UP000000809">
    <property type="component" value="Chromosome"/>
</dbReference>
<dbReference type="GO" id="GO:0008832">
    <property type="term" value="F:dGTPase activity"/>
    <property type="evidence" value="ECO:0007669"/>
    <property type="project" value="TreeGrafter"/>
</dbReference>
<dbReference type="GO" id="GO:0006203">
    <property type="term" value="P:dGTP catabolic process"/>
    <property type="evidence" value="ECO:0007669"/>
    <property type="project" value="TreeGrafter"/>
</dbReference>
<dbReference type="CDD" id="cd00077">
    <property type="entry name" value="HDc"/>
    <property type="match status" value="1"/>
</dbReference>
<dbReference type="Gene3D" id="1.10.3210.10">
    <property type="entry name" value="Hypothetical protein af1432"/>
    <property type="match status" value="2"/>
</dbReference>
<dbReference type="HAMAP" id="MF_01212">
    <property type="entry name" value="dGTPase_type2"/>
    <property type="match status" value="1"/>
</dbReference>
<dbReference type="InterPro" id="IPR006261">
    <property type="entry name" value="dGTPase"/>
</dbReference>
<dbReference type="InterPro" id="IPR050135">
    <property type="entry name" value="dGTPase-like"/>
</dbReference>
<dbReference type="InterPro" id="IPR023023">
    <property type="entry name" value="dNTPase_2"/>
</dbReference>
<dbReference type="InterPro" id="IPR003607">
    <property type="entry name" value="HD/PDEase_dom"/>
</dbReference>
<dbReference type="InterPro" id="IPR006674">
    <property type="entry name" value="HD_domain"/>
</dbReference>
<dbReference type="InterPro" id="IPR026875">
    <property type="entry name" value="PHydrolase_assoc_dom"/>
</dbReference>
<dbReference type="NCBIfam" id="NF041026">
    <property type="entry name" value="antiphage_dGTPase"/>
    <property type="match status" value="1"/>
</dbReference>
<dbReference type="NCBIfam" id="TIGR01353">
    <property type="entry name" value="dGTP_triPase"/>
    <property type="match status" value="1"/>
</dbReference>
<dbReference type="NCBIfam" id="NF003701">
    <property type="entry name" value="PRK05318.1"/>
    <property type="match status" value="1"/>
</dbReference>
<dbReference type="PANTHER" id="PTHR11373:SF40">
    <property type="entry name" value="DEOXYGUANOSINETRIPHOSPHATE TRIPHOSPHOHYDROLASE-LIKE PROTEIN 2"/>
    <property type="match status" value="1"/>
</dbReference>
<dbReference type="PANTHER" id="PTHR11373">
    <property type="entry name" value="DEOXYNUCLEOSIDE TRIPHOSPHATE TRIPHOSPHOHYDROLASE"/>
    <property type="match status" value="1"/>
</dbReference>
<dbReference type="Pfam" id="PF01966">
    <property type="entry name" value="HD"/>
    <property type="match status" value="1"/>
</dbReference>
<dbReference type="Pfam" id="PF13286">
    <property type="entry name" value="HD_assoc"/>
    <property type="match status" value="1"/>
</dbReference>
<dbReference type="SMART" id="SM00471">
    <property type="entry name" value="HDc"/>
    <property type="match status" value="1"/>
</dbReference>
<dbReference type="SUPFAM" id="SSF109604">
    <property type="entry name" value="HD-domain/PDEase-like"/>
    <property type="match status" value="1"/>
</dbReference>
<dbReference type="PROSITE" id="PS51831">
    <property type="entry name" value="HD"/>
    <property type="match status" value="1"/>
</dbReference>
<accession>Q9CMF1</accession>
<gene>
    <name type="ordered locus">PM0878</name>
</gene>
<comment type="similarity">
    <text evidence="1">Belongs to the dGTPase family. Type 2 subfamily.</text>
</comment>
<organism>
    <name type="scientific">Pasteurella multocida (strain Pm70)</name>
    <dbReference type="NCBI Taxonomy" id="272843"/>
    <lineage>
        <taxon>Bacteria</taxon>
        <taxon>Pseudomonadati</taxon>
        <taxon>Pseudomonadota</taxon>
        <taxon>Gammaproteobacteria</taxon>
        <taxon>Pasteurellales</taxon>
        <taxon>Pasteurellaceae</taxon>
        <taxon>Pasteurella</taxon>
    </lineage>
</organism>
<keyword id="KW-0378">Hydrolase</keyword>
<keyword id="KW-1185">Reference proteome</keyword>
<evidence type="ECO:0000255" key="1">
    <source>
        <dbReference type="HAMAP-Rule" id="MF_01212"/>
    </source>
</evidence>
<evidence type="ECO:0000255" key="2">
    <source>
        <dbReference type="PROSITE-ProRule" id="PRU01175"/>
    </source>
</evidence>